<protein>
    <recommendedName>
        <fullName evidence="1">ATP synthase gamma chain</fullName>
    </recommendedName>
    <alternativeName>
        <fullName evidence="1">ATP synthase F1 sector gamma subunit</fullName>
    </alternativeName>
    <alternativeName>
        <fullName evidence="1">F-ATPase gamma subunit</fullName>
    </alternativeName>
</protein>
<dbReference type="EMBL" id="AP009552">
    <property type="protein sequence ID" value="BAG04839.1"/>
    <property type="molecule type" value="Genomic_DNA"/>
</dbReference>
<dbReference type="RefSeq" id="WP_002800073.1">
    <property type="nucleotide sequence ID" value="NC_010296.1"/>
</dbReference>
<dbReference type="SMR" id="B0JWV2"/>
<dbReference type="STRING" id="449447.MAE_50170"/>
<dbReference type="PaxDb" id="449447-MAE_50170"/>
<dbReference type="EnsemblBacteria" id="BAG04839">
    <property type="protein sequence ID" value="BAG04839"/>
    <property type="gene ID" value="MAE_50170"/>
</dbReference>
<dbReference type="KEGG" id="mar:MAE_50170"/>
<dbReference type="eggNOG" id="COG0224">
    <property type="taxonomic scope" value="Bacteria"/>
</dbReference>
<dbReference type="HOGENOM" id="CLU_050669_0_0_3"/>
<dbReference type="BioCyc" id="MAER449447:MAE_RS21775-MONOMER"/>
<dbReference type="Proteomes" id="UP000001510">
    <property type="component" value="Chromosome"/>
</dbReference>
<dbReference type="GO" id="GO:0031676">
    <property type="term" value="C:plasma membrane-derived thylakoid membrane"/>
    <property type="evidence" value="ECO:0007669"/>
    <property type="project" value="UniProtKB-SubCell"/>
</dbReference>
<dbReference type="GO" id="GO:0045259">
    <property type="term" value="C:proton-transporting ATP synthase complex"/>
    <property type="evidence" value="ECO:0007669"/>
    <property type="project" value="UniProtKB-KW"/>
</dbReference>
<dbReference type="GO" id="GO:0005524">
    <property type="term" value="F:ATP binding"/>
    <property type="evidence" value="ECO:0007669"/>
    <property type="project" value="UniProtKB-UniRule"/>
</dbReference>
<dbReference type="GO" id="GO:0046933">
    <property type="term" value="F:proton-transporting ATP synthase activity, rotational mechanism"/>
    <property type="evidence" value="ECO:0007669"/>
    <property type="project" value="UniProtKB-UniRule"/>
</dbReference>
<dbReference type="CDD" id="cd12151">
    <property type="entry name" value="F1-ATPase_gamma"/>
    <property type="match status" value="1"/>
</dbReference>
<dbReference type="FunFam" id="3.40.1380.10:FF:000006">
    <property type="entry name" value="ATP synthase gamma chain"/>
    <property type="match status" value="1"/>
</dbReference>
<dbReference type="FunFam" id="1.10.287.80:FF:000003">
    <property type="entry name" value="ATP synthase gamma chain, chloroplastic"/>
    <property type="match status" value="1"/>
</dbReference>
<dbReference type="FunFam" id="1.10.287.80:FF:000004">
    <property type="entry name" value="ATP synthase gamma chain, chloroplastic"/>
    <property type="match status" value="1"/>
</dbReference>
<dbReference type="Gene3D" id="3.40.1380.10">
    <property type="match status" value="1"/>
</dbReference>
<dbReference type="Gene3D" id="1.10.287.80">
    <property type="entry name" value="ATP synthase, gamma subunit, helix hairpin domain"/>
    <property type="match status" value="2"/>
</dbReference>
<dbReference type="HAMAP" id="MF_00815">
    <property type="entry name" value="ATP_synth_gamma_bact"/>
    <property type="match status" value="1"/>
</dbReference>
<dbReference type="InterPro" id="IPR035968">
    <property type="entry name" value="ATP_synth_F1_ATPase_gsu"/>
</dbReference>
<dbReference type="InterPro" id="IPR000131">
    <property type="entry name" value="ATP_synth_F1_gsu"/>
</dbReference>
<dbReference type="InterPro" id="IPR023632">
    <property type="entry name" value="ATP_synth_F1_gsu_CS"/>
</dbReference>
<dbReference type="NCBIfam" id="TIGR01146">
    <property type="entry name" value="ATPsyn_F1gamma"/>
    <property type="match status" value="1"/>
</dbReference>
<dbReference type="NCBIfam" id="NF004145">
    <property type="entry name" value="PRK05621.1-2"/>
    <property type="match status" value="1"/>
</dbReference>
<dbReference type="PANTHER" id="PTHR11693">
    <property type="entry name" value="ATP SYNTHASE GAMMA CHAIN"/>
    <property type="match status" value="1"/>
</dbReference>
<dbReference type="PANTHER" id="PTHR11693:SF41">
    <property type="entry name" value="ATP SYNTHASE GAMMA CHAIN, CHLOROPLASTIC"/>
    <property type="match status" value="1"/>
</dbReference>
<dbReference type="Pfam" id="PF00231">
    <property type="entry name" value="ATP-synt"/>
    <property type="match status" value="1"/>
</dbReference>
<dbReference type="PRINTS" id="PR00126">
    <property type="entry name" value="ATPASEGAMMA"/>
</dbReference>
<dbReference type="SUPFAM" id="SSF52943">
    <property type="entry name" value="ATP synthase (F1-ATPase), gamma subunit"/>
    <property type="match status" value="1"/>
</dbReference>
<dbReference type="PROSITE" id="PS00153">
    <property type="entry name" value="ATPASE_GAMMA"/>
    <property type="match status" value="1"/>
</dbReference>
<keyword id="KW-0066">ATP synthesis</keyword>
<keyword id="KW-0139">CF(1)</keyword>
<keyword id="KW-0375">Hydrogen ion transport</keyword>
<keyword id="KW-0406">Ion transport</keyword>
<keyword id="KW-0472">Membrane</keyword>
<keyword id="KW-0793">Thylakoid</keyword>
<keyword id="KW-0813">Transport</keyword>
<gene>
    <name evidence="1" type="primary">atpG</name>
    <name evidence="1" type="synonym">atpC</name>
    <name type="ordered locus">MAE_50170</name>
</gene>
<proteinExistence type="inferred from homology"/>
<comment type="function">
    <text evidence="1">Produces ATP from ADP in the presence of a proton gradient across the membrane. The gamma chain is believed to be important in regulating ATPase activity and the flow of protons through the CF(0) complex.</text>
</comment>
<comment type="subunit">
    <text evidence="1">F-type ATPases have 2 components, CF(1) - the catalytic core - and CF(0) - the membrane proton channel. CF(1) has five subunits: alpha(3), beta(3), gamma(1), delta(1), epsilon(1). CF(0) has three main subunits: a, b and c.</text>
</comment>
<comment type="subcellular location">
    <subcellularLocation>
        <location evidence="1">Cellular thylakoid membrane</location>
        <topology evidence="1">Peripheral membrane protein</topology>
    </subcellularLocation>
</comment>
<comment type="similarity">
    <text evidence="1">Belongs to the ATPase gamma chain family.</text>
</comment>
<feature type="chain" id="PRO_1000083794" description="ATP synthase gamma chain">
    <location>
        <begin position="1"/>
        <end position="315"/>
    </location>
</feature>
<name>ATPG_MICAN</name>
<reference key="1">
    <citation type="journal article" date="2007" name="DNA Res.">
        <title>Complete genomic structure of the bloom-forming toxic cyanobacterium Microcystis aeruginosa NIES-843.</title>
        <authorList>
            <person name="Kaneko T."/>
            <person name="Nakajima N."/>
            <person name="Okamoto S."/>
            <person name="Suzuki I."/>
            <person name="Tanabe Y."/>
            <person name="Tamaoki M."/>
            <person name="Nakamura Y."/>
            <person name="Kasai F."/>
            <person name="Watanabe A."/>
            <person name="Kawashima K."/>
            <person name="Kishida Y."/>
            <person name="Ono A."/>
            <person name="Shimizu Y."/>
            <person name="Takahashi C."/>
            <person name="Minami C."/>
            <person name="Fujishiro T."/>
            <person name="Kohara M."/>
            <person name="Katoh M."/>
            <person name="Nakazaki N."/>
            <person name="Nakayama S."/>
            <person name="Yamada M."/>
            <person name="Tabata S."/>
            <person name="Watanabe M.M."/>
        </authorList>
    </citation>
    <scope>NUCLEOTIDE SEQUENCE [LARGE SCALE GENOMIC DNA]</scope>
    <source>
        <strain>NIES-843 / IAM M-247</strain>
    </source>
</reference>
<evidence type="ECO:0000255" key="1">
    <source>
        <dbReference type="HAMAP-Rule" id="MF_00815"/>
    </source>
</evidence>
<accession>B0JWV2</accession>
<sequence>MPNLKAIRDQIQSVKNTKKITEAMRLVAAAKVRRAQEQVLCTRPFADALAQVLYNLQGRLAFSDVNLPLLAQREVKTVALLVVTGDRGLCGGYNTNVIRRAEQRMNELKEQGINYQLVVAGRKAAQYFERRNAPIAAKFINLEQIPTADEAGTIGDELLSLFLSETVDRVELIYTRFISLISATPVIQTLLPLTTQGLAVQDDEIFRLVTKEGKFKVQREKMASQPAQVFPQDMIFEQNPVQILDSLLPLYLNNQLLRALQESAASELAARMTAMSNASENASELIGTLSRTYNKARQAAITQELLEVVAGANAL</sequence>
<organism>
    <name type="scientific">Microcystis aeruginosa (strain NIES-843 / IAM M-2473)</name>
    <dbReference type="NCBI Taxonomy" id="449447"/>
    <lineage>
        <taxon>Bacteria</taxon>
        <taxon>Bacillati</taxon>
        <taxon>Cyanobacteriota</taxon>
        <taxon>Cyanophyceae</taxon>
        <taxon>Oscillatoriophycideae</taxon>
        <taxon>Chroococcales</taxon>
        <taxon>Microcystaceae</taxon>
        <taxon>Microcystis</taxon>
    </lineage>
</organism>